<proteinExistence type="inferred from homology"/>
<reference key="1">
    <citation type="journal article" date="1997" name="Nature">
        <title>The complete genome sequence of the gastric pathogen Helicobacter pylori.</title>
        <authorList>
            <person name="Tomb J.-F."/>
            <person name="White O."/>
            <person name="Kerlavage A.R."/>
            <person name="Clayton R.A."/>
            <person name="Sutton G.G."/>
            <person name="Fleischmann R.D."/>
            <person name="Ketchum K.A."/>
            <person name="Klenk H.-P."/>
            <person name="Gill S.R."/>
            <person name="Dougherty B.A."/>
            <person name="Nelson K.E."/>
            <person name="Quackenbush J."/>
            <person name="Zhou L."/>
            <person name="Kirkness E.F."/>
            <person name="Peterson S.N."/>
            <person name="Loftus B.J."/>
            <person name="Richardson D.L."/>
            <person name="Dodson R.J."/>
            <person name="Khalak H.G."/>
            <person name="Glodek A."/>
            <person name="McKenney K."/>
            <person name="FitzGerald L.M."/>
            <person name="Lee N."/>
            <person name="Adams M.D."/>
            <person name="Hickey E.K."/>
            <person name="Berg D.E."/>
            <person name="Gocayne J.D."/>
            <person name="Utterback T.R."/>
            <person name="Peterson J.D."/>
            <person name="Kelley J.M."/>
            <person name="Cotton M.D."/>
            <person name="Weidman J.F."/>
            <person name="Fujii C."/>
            <person name="Bowman C."/>
            <person name="Watthey L."/>
            <person name="Wallin E."/>
            <person name="Hayes W.S."/>
            <person name="Borodovsky M."/>
            <person name="Karp P.D."/>
            <person name="Smith H.O."/>
            <person name="Fraser C.M."/>
            <person name="Venter J.C."/>
        </authorList>
    </citation>
    <scope>NUCLEOTIDE SEQUENCE [LARGE SCALE GENOMIC DNA]</scope>
    <source>
        <strain>ATCC 700392 / 26695</strain>
    </source>
</reference>
<dbReference type="EC" id="6.1.1.7" evidence="1"/>
<dbReference type="EMBL" id="AE000511">
    <property type="protein sequence ID" value="AAD08285.1"/>
    <property type="molecule type" value="Genomic_DNA"/>
</dbReference>
<dbReference type="PIR" id="A64675">
    <property type="entry name" value="A64675"/>
</dbReference>
<dbReference type="RefSeq" id="NP_208033.1">
    <property type="nucleotide sequence ID" value="NC_000915.1"/>
</dbReference>
<dbReference type="RefSeq" id="WP_000354754.1">
    <property type="nucleotide sequence ID" value="NC_018939.1"/>
</dbReference>
<dbReference type="SMR" id="P56452"/>
<dbReference type="DIP" id="DIP-3216N"/>
<dbReference type="FunCoup" id="P56452">
    <property type="interactions" value="383"/>
</dbReference>
<dbReference type="IntAct" id="P56452">
    <property type="interactions" value="5"/>
</dbReference>
<dbReference type="MINT" id="P56452"/>
<dbReference type="STRING" id="85962.HP_1241"/>
<dbReference type="PaxDb" id="85962-C694_06400"/>
<dbReference type="EnsemblBacteria" id="AAD08285">
    <property type="protein sequence ID" value="AAD08285"/>
    <property type="gene ID" value="HP_1241"/>
</dbReference>
<dbReference type="KEGG" id="heo:C694_06400"/>
<dbReference type="KEGG" id="hpy:HP_1241"/>
<dbReference type="PATRIC" id="fig|85962.47.peg.1330"/>
<dbReference type="eggNOG" id="COG0013">
    <property type="taxonomic scope" value="Bacteria"/>
</dbReference>
<dbReference type="InParanoid" id="P56452"/>
<dbReference type="OrthoDB" id="9803884at2"/>
<dbReference type="PhylomeDB" id="P56452"/>
<dbReference type="Proteomes" id="UP000000429">
    <property type="component" value="Chromosome"/>
</dbReference>
<dbReference type="GO" id="GO:0005829">
    <property type="term" value="C:cytosol"/>
    <property type="evidence" value="ECO:0000318"/>
    <property type="project" value="GO_Central"/>
</dbReference>
<dbReference type="GO" id="GO:0004813">
    <property type="term" value="F:alanine-tRNA ligase activity"/>
    <property type="evidence" value="ECO:0000318"/>
    <property type="project" value="GO_Central"/>
</dbReference>
<dbReference type="GO" id="GO:0002161">
    <property type="term" value="F:aminoacyl-tRNA deacylase activity"/>
    <property type="evidence" value="ECO:0000318"/>
    <property type="project" value="GO_Central"/>
</dbReference>
<dbReference type="GO" id="GO:0005524">
    <property type="term" value="F:ATP binding"/>
    <property type="evidence" value="ECO:0007669"/>
    <property type="project" value="UniProtKB-UniRule"/>
</dbReference>
<dbReference type="GO" id="GO:0000049">
    <property type="term" value="F:tRNA binding"/>
    <property type="evidence" value="ECO:0007669"/>
    <property type="project" value="UniProtKB-KW"/>
</dbReference>
<dbReference type="GO" id="GO:0008270">
    <property type="term" value="F:zinc ion binding"/>
    <property type="evidence" value="ECO:0007669"/>
    <property type="project" value="UniProtKB-UniRule"/>
</dbReference>
<dbReference type="GO" id="GO:0006419">
    <property type="term" value="P:alanyl-tRNA aminoacylation"/>
    <property type="evidence" value="ECO:0000318"/>
    <property type="project" value="GO_Central"/>
</dbReference>
<dbReference type="GO" id="GO:0045892">
    <property type="term" value="P:negative regulation of DNA-templated transcription"/>
    <property type="evidence" value="ECO:0000318"/>
    <property type="project" value="GO_Central"/>
</dbReference>
<dbReference type="CDD" id="cd00673">
    <property type="entry name" value="AlaRS_core"/>
    <property type="match status" value="1"/>
</dbReference>
<dbReference type="FunFam" id="2.40.30.130:FF:000001">
    <property type="entry name" value="Alanine--tRNA ligase"/>
    <property type="match status" value="1"/>
</dbReference>
<dbReference type="FunFam" id="3.10.310.40:FF:000001">
    <property type="entry name" value="Alanine--tRNA ligase"/>
    <property type="match status" value="1"/>
</dbReference>
<dbReference type="FunFam" id="3.30.54.20:FF:000001">
    <property type="entry name" value="Alanine--tRNA ligase"/>
    <property type="match status" value="1"/>
</dbReference>
<dbReference type="FunFam" id="3.30.930.10:FF:000004">
    <property type="entry name" value="Alanine--tRNA ligase"/>
    <property type="match status" value="1"/>
</dbReference>
<dbReference type="FunFam" id="3.30.980.10:FF:000004">
    <property type="entry name" value="Alanine--tRNA ligase, cytoplasmic"/>
    <property type="match status" value="1"/>
</dbReference>
<dbReference type="Gene3D" id="2.40.30.130">
    <property type="match status" value="1"/>
</dbReference>
<dbReference type="Gene3D" id="3.10.310.40">
    <property type="match status" value="1"/>
</dbReference>
<dbReference type="Gene3D" id="3.30.54.20">
    <property type="match status" value="1"/>
</dbReference>
<dbReference type="Gene3D" id="3.30.930.10">
    <property type="entry name" value="Bira Bifunctional Protein, Domain 2"/>
    <property type="match status" value="1"/>
</dbReference>
<dbReference type="Gene3D" id="3.30.980.10">
    <property type="entry name" value="Threonyl-trna Synthetase, Chain A, domain 2"/>
    <property type="match status" value="1"/>
</dbReference>
<dbReference type="HAMAP" id="MF_00036_B">
    <property type="entry name" value="Ala_tRNA_synth_B"/>
    <property type="match status" value="1"/>
</dbReference>
<dbReference type="InterPro" id="IPR045864">
    <property type="entry name" value="aa-tRNA-synth_II/BPL/LPL"/>
</dbReference>
<dbReference type="InterPro" id="IPR002318">
    <property type="entry name" value="Ala-tRNA-lgiase_IIc"/>
</dbReference>
<dbReference type="InterPro" id="IPR018162">
    <property type="entry name" value="Ala-tRNA-ligase_IIc_anticod-bd"/>
</dbReference>
<dbReference type="InterPro" id="IPR018165">
    <property type="entry name" value="Ala-tRNA-synth_IIc_core"/>
</dbReference>
<dbReference type="InterPro" id="IPR018164">
    <property type="entry name" value="Ala-tRNA-synth_IIc_N"/>
</dbReference>
<dbReference type="InterPro" id="IPR050058">
    <property type="entry name" value="Ala-tRNA_ligase"/>
</dbReference>
<dbReference type="InterPro" id="IPR023033">
    <property type="entry name" value="Ala_tRNA_ligase_euk/bac"/>
</dbReference>
<dbReference type="InterPro" id="IPR003156">
    <property type="entry name" value="DHHA1_dom"/>
</dbReference>
<dbReference type="InterPro" id="IPR018163">
    <property type="entry name" value="Thr/Ala-tRNA-synth_IIc_edit"/>
</dbReference>
<dbReference type="InterPro" id="IPR009000">
    <property type="entry name" value="Transl_B-barrel_sf"/>
</dbReference>
<dbReference type="InterPro" id="IPR012947">
    <property type="entry name" value="tRNA_SAD"/>
</dbReference>
<dbReference type="NCBIfam" id="TIGR00344">
    <property type="entry name" value="alaS"/>
    <property type="match status" value="1"/>
</dbReference>
<dbReference type="PANTHER" id="PTHR11777:SF9">
    <property type="entry name" value="ALANINE--TRNA LIGASE, CYTOPLASMIC"/>
    <property type="match status" value="1"/>
</dbReference>
<dbReference type="PANTHER" id="PTHR11777">
    <property type="entry name" value="ALANYL-TRNA SYNTHETASE"/>
    <property type="match status" value="1"/>
</dbReference>
<dbReference type="Pfam" id="PF02272">
    <property type="entry name" value="DHHA1"/>
    <property type="match status" value="1"/>
</dbReference>
<dbReference type="Pfam" id="PF01411">
    <property type="entry name" value="tRNA-synt_2c"/>
    <property type="match status" value="1"/>
</dbReference>
<dbReference type="Pfam" id="PF07973">
    <property type="entry name" value="tRNA_SAD"/>
    <property type="match status" value="1"/>
</dbReference>
<dbReference type="PRINTS" id="PR00980">
    <property type="entry name" value="TRNASYNTHALA"/>
</dbReference>
<dbReference type="SMART" id="SM00863">
    <property type="entry name" value="tRNA_SAD"/>
    <property type="match status" value="1"/>
</dbReference>
<dbReference type="SUPFAM" id="SSF55681">
    <property type="entry name" value="Class II aaRS and biotin synthetases"/>
    <property type="match status" value="1"/>
</dbReference>
<dbReference type="SUPFAM" id="SSF101353">
    <property type="entry name" value="Putative anticodon-binding domain of alanyl-tRNA synthetase (AlaRS)"/>
    <property type="match status" value="1"/>
</dbReference>
<dbReference type="SUPFAM" id="SSF55186">
    <property type="entry name" value="ThrRS/AlaRS common domain"/>
    <property type="match status" value="1"/>
</dbReference>
<dbReference type="SUPFAM" id="SSF50447">
    <property type="entry name" value="Translation proteins"/>
    <property type="match status" value="1"/>
</dbReference>
<dbReference type="PROSITE" id="PS50860">
    <property type="entry name" value="AA_TRNA_LIGASE_II_ALA"/>
    <property type="match status" value="1"/>
</dbReference>
<gene>
    <name evidence="1" type="primary">alaS</name>
    <name type="ordered locus">HP_1241</name>
</gene>
<name>SYA_HELPY</name>
<keyword id="KW-0030">Aminoacyl-tRNA synthetase</keyword>
<keyword id="KW-0067">ATP-binding</keyword>
<keyword id="KW-0963">Cytoplasm</keyword>
<keyword id="KW-0436">Ligase</keyword>
<keyword id="KW-0479">Metal-binding</keyword>
<keyword id="KW-0547">Nucleotide-binding</keyword>
<keyword id="KW-0648">Protein biosynthesis</keyword>
<keyword id="KW-1185">Reference proteome</keyword>
<keyword id="KW-0694">RNA-binding</keyword>
<keyword id="KW-0820">tRNA-binding</keyword>
<keyword id="KW-0862">Zinc</keyword>
<organism>
    <name type="scientific">Helicobacter pylori (strain ATCC 700392 / 26695)</name>
    <name type="common">Campylobacter pylori</name>
    <dbReference type="NCBI Taxonomy" id="85962"/>
    <lineage>
        <taxon>Bacteria</taxon>
        <taxon>Pseudomonadati</taxon>
        <taxon>Campylobacterota</taxon>
        <taxon>Epsilonproteobacteria</taxon>
        <taxon>Campylobacterales</taxon>
        <taxon>Helicobacteraceae</taxon>
        <taxon>Helicobacter</taxon>
    </lineage>
</organism>
<comment type="function">
    <text evidence="1">Catalyzes the attachment of alanine to tRNA(Ala) in a two-step reaction: alanine is first activated by ATP to form Ala-AMP and then transferred to the acceptor end of tRNA(Ala). Also edits incorrectly charged Ser-tRNA(Ala) and Gly-tRNA(Ala) via its editing domain.</text>
</comment>
<comment type="catalytic activity">
    <reaction evidence="1">
        <text>tRNA(Ala) + L-alanine + ATP = L-alanyl-tRNA(Ala) + AMP + diphosphate</text>
        <dbReference type="Rhea" id="RHEA:12540"/>
        <dbReference type="Rhea" id="RHEA-COMP:9657"/>
        <dbReference type="Rhea" id="RHEA-COMP:9923"/>
        <dbReference type="ChEBI" id="CHEBI:30616"/>
        <dbReference type="ChEBI" id="CHEBI:33019"/>
        <dbReference type="ChEBI" id="CHEBI:57972"/>
        <dbReference type="ChEBI" id="CHEBI:78442"/>
        <dbReference type="ChEBI" id="CHEBI:78497"/>
        <dbReference type="ChEBI" id="CHEBI:456215"/>
        <dbReference type="EC" id="6.1.1.7"/>
    </reaction>
</comment>
<comment type="cofactor">
    <cofactor evidence="1">
        <name>Zn(2+)</name>
        <dbReference type="ChEBI" id="CHEBI:29105"/>
    </cofactor>
    <text evidence="1">Binds 1 zinc ion per subunit.</text>
</comment>
<comment type="subcellular location">
    <subcellularLocation>
        <location evidence="1">Cytoplasm</location>
    </subcellularLocation>
</comment>
<comment type="domain">
    <text evidence="1">Consists of three domains; the N-terminal catalytic domain, the editing domain and the C-terminal C-Ala domain. The editing domain removes incorrectly charged amino acids, while the C-Ala domain, along with tRNA(Ala), serves as a bridge to cooperatively bring together the editing and aminoacylation centers thus stimulating deacylation of misacylated tRNAs.</text>
</comment>
<comment type="similarity">
    <text evidence="1">Belongs to the class-II aminoacyl-tRNA synthetase family.</text>
</comment>
<evidence type="ECO:0000255" key="1">
    <source>
        <dbReference type="HAMAP-Rule" id="MF_00036"/>
    </source>
</evidence>
<feature type="chain" id="PRO_0000075125" description="Alanine--tRNA ligase">
    <location>
        <begin position="1"/>
        <end position="847"/>
    </location>
</feature>
<feature type="binding site" evidence="1">
    <location>
        <position position="554"/>
    </location>
    <ligand>
        <name>Zn(2+)</name>
        <dbReference type="ChEBI" id="CHEBI:29105"/>
    </ligand>
</feature>
<feature type="binding site" evidence="1">
    <location>
        <position position="558"/>
    </location>
    <ligand>
        <name>Zn(2+)</name>
        <dbReference type="ChEBI" id="CHEBI:29105"/>
    </ligand>
</feature>
<feature type="binding site" evidence="1">
    <location>
        <position position="656"/>
    </location>
    <ligand>
        <name>Zn(2+)</name>
        <dbReference type="ChEBI" id="CHEBI:29105"/>
    </ligand>
</feature>
<feature type="binding site" evidence="1">
    <location>
        <position position="660"/>
    </location>
    <ligand>
        <name>Zn(2+)</name>
        <dbReference type="ChEBI" id="CHEBI:29105"/>
    </ligand>
</feature>
<sequence length="847" mass="94700">MDIRNEFLQFFQNKGHAVYPSMPLVPNDATLLFTNAGMVQFKDIFTGIVPRPSIPRAASSQLCMRAGGKHNDLENVGYTARHHTLFEMLGNFSFGDYFKEEAILFAWEFVTKNLGFKPKDLYISVHEKDDEAVKLWEKFVPVDRIKKMGDKDNFWQMGDSGPCGPCSEIYIDQGEKHFKGSEDYFGGEGDRFLEIWNLVFMQYERSNDGVLSPLPKPSIDTGMGLERVQALLEHKLNNFDSSLFAPLMEEISELTSLDYASEFQPSFRVVADHARAVAFLLAQGVHFNKEGRGYVLRRILRRALRHGYLMGLKEAFLYKVVGVVCEQFANTHAYLKESKEMVVKECFEEEEHFLETLESGMELFNLSLKHLNENKIFDGKIAFKLYDTFGFPLDLTNDMLRSHGACADMQGFELCMQEQVKRSKASWKGKQNNADFSAILNAYAPNVFVGYETTECSAKVLGFFDSDFKEITDANPNQEVWVLLEKTPFYAEGGGAIGDRGALFKDNGEVAIVLDTKNFFGLNFSLLEIKKALKKGDQVIAQVSDERFEIAKHHSATHLLQSALREVLGSHVSQAGSLVESKRLRFDFSHAKALNDEELEKVEDLVNAQIFKHLNSQVEHMPLNQAKDKGALALFSEKYAENVRVVSFKEASIELCGGIHVENTGLIGGFRIVKESGVSSGVRRIEAVCGKAFYQLAKEENKELKNAKTLLKNNDVIAGINKLKESVKNSQKAPVSMDLPVEKIHGVNLVVGVVEQGDIKEMIDRLKSKHERLLAMVFKKENERITLACGVKNAPIKANVWANEVAQILGGKGGGRGDFASAGGKDIENLQAALNLAKNTALKALEG</sequence>
<protein>
    <recommendedName>
        <fullName evidence="1">Alanine--tRNA ligase</fullName>
        <ecNumber evidence="1">6.1.1.7</ecNumber>
    </recommendedName>
    <alternativeName>
        <fullName evidence="1">Alanyl-tRNA synthetase</fullName>
        <shortName evidence="1">AlaRS</shortName>
    </alternativeName>
</protein>
<accession>P56452</accession>